<protein>
    <recommendedName>
        <fullName>Calmodulin-like protein</fullName>
    </recommendedName>
</protein>
<proteinExistence type="inferred from homology"/>
<dbReference type="EMBL" id="X04259">
    <property type="protein sequence ID" value="CAA27814.1"/>
    <property type="molecule type" value="Genomic_DNA"/>
</dbReference>
<dbReference type="EMBL" id="Z77653">
    <property type="protein sequence ID" value="CAB01124.2"/>
    <property type="molecule type" value="Genomic_DNA"/>
</dbReference>
<dbReference type="PIR" id="A24921">
    <property type="entry name" value="A24921"/>
</dbReference>
<dbReference type="PIR" id="T19229">
    <property type="entry name" value="T19229"/>
</dbReference>
<dbReference type="RefSeq" id="NP_001256429.1">
    <property type="nucleotide sequence ID" value="NM_001269500.2"/>
</dbReference>
<dbReference type="SMR" id="P04630"/>
<dbReference type="FunCoup" id="P04630">
    <property type="interactions" value="103"/>
</dbReference>
<dbReference type="STRING" id="6239.C13C12.1b.1"/>
<dbReference type="PaxDb" id="6239-C13C12.1b"/>
<dbReference type="EnsemblMetazoa" id="C13C12.1a.1">
    <property type="protein sequence ID" value="C13C12.1a.1"/>
    <property type="gene ID" value="WBGene00000285"/>
</dbReference>
<dbReference type="GeneID" id="179715"/>
<dbReference type="KEGG" id="cel:CELE_C13C12.1"/>
<dbReference type="UCSC" id="T21H3.3.1">
    <property type="organism name" value="c. elegans"/>
</dbReference>
<dbReference type="AGR" id="WB:WBGene00000285"/>
<dbReference type="CTD" id="179715"/>
<dbReference type="WormBase" id="C13C12.1a">
    <property type="protein sequence ID" value="CE42931"/>
    <property type="gene ID" value="WBGene00000285"/>
    <property type="gene designation" value="cal-1"/>
</dbReference>
<dbReference type="eggNOG" id="KOG0027">
    <property type="taxonomic scope" value="Eukaryota"/>
</dbReference>
<dbReference type="GeneTree" id="ENSGT00970000196720"/>
<dbReference type="HOGENOM" id="CLU_061288_2_1_1"/>
<dbReference type="InParanoid" id="P04630"/>
<dbReference type="OrthoDB" id="26525at2759"/>
<dbReference type="PhylomeDB" id="P04630"/>
<dbReference type="PRO" id="PR:P04630"/>
<dbReference type="Proteomes" id="UP000001940">
    <property type="component" value="Chromosome V"/>
</dbReference>
<dbReference type="Bgee" id="WBGene00000285">
    <property type="expression patterns" value="Expressed in larva and 3 other cell types or tissues"/>
</dbReference>
<dbReference type="ExpressionAtlas" id="P04630">
    <property type="expression patterns" value="baseline and differential"/>
</dbReference>
<dbReference type="GO" id="GO:0005813">
    <property type="term" value="C:centrosome"/>
    <property type="evidence" value="ECO:0000318"/>
    <property type="project" value="GO_Central"/>
</dbReference>
<dbReference type="GO" id="GO:0005737">
    <property type="term" value="C:cytoplasm"/>
    <property type="evidence" value="ECO:0000318"/>
    <property type="project" value="GO_Central"/>
</dbReference>
<dbReference type="GO" id="GO:0005509">
    <property type="term" value="F:calcium ion binding"/>
    <property type="evidence" value="ECO:0000318"/>
    <property type="project" value="GO_Central"/>
</dbReference>
<dbReference type="CDD" id="cd00051">
    <property type="entry name" value="EFh"/>
    <property type="match status" value="2"/>
</dbReference>
<dbReference type="FunFam" id="1.10.238.10:FF:000238">
    <property type="entry name" value="CALmodulin related genes"/>
    <property type="match status" value="1"/>
</dbReference>
<dbReference type="FunFam" id="1.10.238.10:FF:000337">
    <property type="entry name" value="CALmodulin related genes"/>
    <property type="match status" value="1"/>
</dbReference>
<dbReference type="Gene3D" id="1.10.238.10">
    <property type="entry name" value="EF-hand"/>
    <property type="match status" value="2"/>
</dbReference>
<dbReference type="InterPro" id="IPR050230">
    <property type="entry name" value="CALM/Myosin/TropC-like"/>
</dbReference>
<dbReference type="InterPro" id="IPR011992">
    <property type="entry name" value="EF-hand-dom_pair"/>
</dbReference>
<dbReference type="InterPro" id="IPR018247">
    <property type="entry name" value="EF_Hand_1_Ca_BS"/>
</dbReference>
<dbReference type="InterPro" id="IPR002048">
    <property type="entry name" value="EF_hand_dom"/>
</dbReference>
<dbReference type="PANTHER" id="PTHR23048:SF0">
    <property type="entry name" value="CALMODULIN LIKE 3"/>
    <property type="match status" value="1"/>
</dbReference>
<dbReference type="PANTHER" id="PTHR23048">
    <property type="entry name" value="MYOSIN LIGHT CHAIN 1, 3"/>
    <property type="match status" value="1"/>
</dbReference>
<dbReference type="Pfam" id="PF13499">
    <property type="entry name" value="EF-hand_7"/>
    <property type="match status" value="2"/>
</dbReference>
<dbReference type="SMART" id="SM00054">
    <property type="entry name" value="EFh"/>
    <property type="match status" value="4"/>
</dbReference>
<dbReference type="SUPFAM" id="SSF47473">
    <property type="entry name" value="EF-hand"/>
    <property type="match status" value="1"/>
</dbReference>
<dbReference type="PROSITE" id="PS00018">
    <property type="entry name" value="EF_HAND_1"/>
    <property type="match status" value="4"/>
</dbReference>
<dbReference type="PROSITE" id="PS50222">
    <property type="entry name" value="EF_HAND_2"/>
    <property type="match status" value="4"/>
</dbReference>
<organism>
    <name type="scientific">Caenorhabditis elegans</name>
    <dbReference type="NCBI Taxonomy" id="6239"/>
    <lineage>
        <taxon>Eukaryota</taxon>
        <taxon>Metazoa</taxon>
        <taxon>Ecdysozoa</taxon>
        <taxon>Nematoda</taxon>
        <taxon>Chromadorea</taxon>
        <taxon>Rhabditida</taxon>
        <taxon>Rhabditina</taxon>
        <taxon>Rhabditomorpha</taxon>
        <taxon>Rhabditoidea</taxon>
        <taxon>Rhabditidae</taxon>
        <taxon>Peloderinae</taxon>
        <taxon>Caenorhabditis</taxon>
    </lineage>
</organism>
<sequence>MAIPSNLMQFSEDIIKQLTPEEIDEFREAFMMFDKDGNGTISTKELGIAMRSLGQNPTEQEILEMINEVDIDGNGQIEFPEFCVMMKRMMKETDSEMIREAFRVFDKDGNGVITAQEFRYFMVHMGMQFSEEEVDEMIKEVDVDGDGEIDYEEFVKMMSNQ</sequence>
<evidence type="ECO:0000255" key="1">
    <source>
        <dbReference type="PROSITE-ProRule" id="PRU00448"/>
    </source>
</evidence>
<evidence type="ECO:0000305" key="2"/>
<reference key="1">
    <citation type="journal article" date="1986" name="J. Mol. Biol.">
        <title>A novel calmodulin-like gene from the nematode Caenorhabditis elegans.</title>
        <authorList>
            <person name="Salvato M."/>
            <person name="Sulston J."/>
            <person name="Albertson D."/>
            <person name="Brenner S."/>
        </authorList>
    </citation>
    <scope>NUCLEOTIDE SEQUENCE [GENOMIC DNA]</scope>
    <source>
        <strain>Bristol N2</strain>
    </source>
</reference>
<reference key="2">
    <citation type="journal article" date="1998" name="Science">
        <title>Genome sequence of the nematode C. elegans: a platform for investigating biology.</title>
        <authorList>
            <consortium name="The C. elegans sequencing consortium"/>
        </authorList>
    </citation>
    <scope>NUCLEOTIDE SEQUENCE [LARGE SCALE GENOMIC DNA]</scope>
    <source>
        <strain>Bristol N2</strain>
    </source>
</reference>
<feature type="chain" id="PRO_0000073545" description="Calmodulin-like protein">
    <location>
        <begin position="1"/>
        <end position="161"/>
    </location>
</feature>
<feature type="domain" description="EF-hand 1" evidence="1">
    <location>
        <begin position="21"/>
        <end position="56"/>
    </location>
</feature>
<feature type="domain" description="EF-hand 2" evidence="1">
    <location>
        <begin position="57"/>
        <end position="92"/>
    </location>
</feature>
<feature type="domain" description="EF-hand 3" evidence="1">
    <location>
        <begin position="93"/>
        <end position="128"/>
    </location>
</feature>
<feature type="domain" description="EF-hand 4" evidence="1">
    <location>
        <begin position="129"/>
        <end position="161"/>
    </location>
</feature>
<feature type="binding site" evidence="1">
    <location>
        <position position="34"/>
    </location>
    <ligand>
        <name>Ca(2+)</name>
        <dbReference type="ChEBI" id="CHEBI:29108"/>
        <label>1</label>
    </ligand>
</feature>
<feature type="binding site" evidence="1">
    <location>
        <position position="36"/>
    </location>
    <ligand>
        <name>Ca(2+)</name>
        <dbReference type="ChEBI" id="CHEBI:29108"/>
        <label>1</label>
    </ligand>
</feature>
<feature type="binding site" evidence="1">
    <location>
        <position position="38"/>
    </location>
    <ligand>
        <name>Ca(2+)</name>
        <dbReference type="ChEBI" id="CHEBI:29108"/>
        <label>1</label>
    </ligand>
</feature>
<feature type="binding site" evidence="1">
    <location>
        <position position="40"/>
    </location>
    <ligand>
        <name>Ca(2+)</name>
        <dbReference type="ChEBI" id="CHEBI:29108"/>
        <label>1</label>
    </ligand>
</feature>
<feature type="binding site" evidence="1">
    <location>
        <position position="45"/>
    </location>
    <ligand>
        <name>Ca(2+)</name>
        <dbReference type="ChEBI" id="CHEBI:29108"/>
        <label>1</label>
    </ligand>
</feature>
<feature type="binding site" evidence="1">
    <location>
        <position position="70"/>
    </location>
    <ligand>
        <name>Ca(2+)</name>
        <dbReference type="ChEBI" id="CHEBI:29108"/>
        <label>2</label>
    </ligand>
</feature>
<feature type="binding site" evidence="1">
    <location>
        <position position="72"/>
    </location>
    <ligand>
        <name>Ca(2+)</name>
        <dbReference type="ChEBI" id="CHEBI:29108"/>
        <label>2</label>
    </ligand>
</feature>
<feature type="binding site" evidence="1">
    <location>
        <position position="74"/>
    </location>
    <ligand>
        <name>Ca(2+)</name>
        <dbReference type="ChEBI" id="CHEBI:29108"/>
        <label>2</label>
    </ligand>
</feature>
<feature type="binding site" evidence="1">
    <location>
        <position position="76"/>
    </location>
    <ligand>
        <name>Ca(2+)</name>
        <dbReference type="ChEBI" id="CHEBI:29108"/>
        <label>2</label>
    </ligand>
</feature>
<feature type="binding site" evidence="1">
    <location>
        <position position="81"/>
    </location>
    <ligand>
        <name>Ca(2+)</name>
        <dbReference type="ChEBI" id="CHEBI:29108"/>
        <label>2</label>
    </ligand>
</feature>
<feature type="binding site" evidence="1">
    <location>
        <position position="106"/>
    </location>
    <ligand>
        <name>Ca(2+)</name>
        <dbReference type="ChEBI" id="CHEBI:29108"/>
        <label>3</label>
    </ligand>
</feature>
<feature type="binding site" evidence="1">
    <location>
        <position position="108"/>
    </location>
    <ligand>
        <name>Ca(2+)</name>
        <dbReference type="ChEBI" id="CHEBI:29108"/>
        <label>3</label>
    </ligand>
</feature>
<feature type="binding site" evidence="1">
    <location>
        <position position="110"/>
    </location>
    <ligand>
        <name>Ca(2+)</name>
        <dbReference type="ChEBI" id="CHEBI:29108"/>
        <label>3</label>
    </ligand>
</feature>
<feature type="binding site" evidence="1">
    <location>
        <position position="117"/>
    </location>
    <ligand>
        <name>Ca(2+)</name>
        <dbReference type="ChEBI" id="CHEBI:29108"/>
        <label>3</label>
    </ligand>
</feature>
<feature type="binding site" evidence="1">
    <location>
        <position position="142"/>
    </location>
    <ligand>
        <name>Ca(2+)</name>
        <dbReference type="ChEBI" id="CHEBI:29108"/>
        <label>4</label>
    </ligand>
</feature>
<feature type="binding site" evidence="1">
    <location>
        <position position="144"/>
    </location>
    <ligand>
        <name>Ca(2+)</name>
        <dbReference type="ChEBI" id="CHEBI:29108"/>
        <label>4</label>
    </ligand>
</feature>
<feature type="binding site" evidence="1">
    <location>
        <position position="146"/>
    </location>
    <ligand>
        <name>Ca(2+)</name>
        <dbReference type="ChEBI" id="CHEBI:29108"/>
        <label>4</label>
    </ligand>
</feature>
<feature type="binding site" evidence="1">
    <location>
        <position position="148"/>
    </location>
    <ligand>
        <name>Ca(2+)</name>
        <dbReference type="ChEBI" id="CHEBI:29108"/>
        <label>4</label>
    </ligand>
</feature>
<feature type="binding site" evidence="1">
    <location>
        <position position="153"/>
    </location>
    <ligand>
        <name>Ca(2+)</name>
        <dbReference type="ChEBI" id="CHEBI:29108"/>
        <label>4</label>
    </ligand>
</feature>
<accession>P04630</accession>
<name>CALL_CAEEL</name>
<comment type="function">
    <text>This protein resembles calmodulin in sequence but possibly resembles troponin C in function.</text>
</comment>
<comment type="similarity">
    <text evidence="2">Belongs to the calmodulin family.</text>
</comment>
<keyword id="KW-0106">Calcium</keyword>
<keyword id="KW-0479">Metal-binding</keyword>
<keyword id="KW-1185">Reference proteome</keyword>
<keyword id="KW-0677">Repeat</keyword>
<gene>
    <name type="primary">cal-1</name>
    <name type="synonym">cmd-1</name>
    <name type="ORF">C13C12.1</name>
</gene>